<protein>
    <recommendedName>
        <fullName evidence="1">GMP synthase [glutamine-hydrolyzing]</fullName>
        <ecNumber evidence="1">6.3.5.2</ecNumber>
    </recommendedName>
    <alternativeName>
        <fullName evidence="1">GMP synthetase</fullName>
    </alternativeName>
    <alternativeName>
        <fullName evidence="1">Glutamine amidotransferase</fullName>
    </alternativeName>
</protein>
<reference key="1">
    <citation type="journal article" date="2010" name="J. Bacteriol.">
        <title>Whole genome sequences of two Xylella fastidiosa strains (M12 and M23) causing almond leaf scorch disease in California.</title>
        <authorList>
            <person name="Chen J."/>
            <person name="Xie G."/>
            <person name="Han S."/>
            <person name="Chertkov O."/>
            <person name="Sims D."/>
            <person name="Civerolo E.L."/>
        </authorList>
    </citation>
    <scope>NUCLEOTIDE SEQUENCE [LARGE SCALE GENOMIC DNA]</scope>
    <source>
        <strain>M23</strain>
    </source>
</reference>
<gene>
    <name evidence="1" type="primary">guaA</name>
    <name type="ordered locus">XfasM23_1531</name>
</gene>
<sequence>MTPNIHHDKILILDFGAQYTQLIARRIREIGVYCEVWPWDHSPEEILSFGAKGIILSGGPESTTSPGAPAAPQHVFDSDLPIFGICYGMQTMAVHLGGATEAADKREFGHASVQVIYPDTLFSGLSDHPSEFRLDVWMSHGDHVSRVPPCFTITAATDRIPIAAMSREDKRWYGVQFHPEVTHTLQGQALLRRFVVDICGCQTLWTSANIIEDQIARVRERVGCDEVILGLSGGVDSSVVAALLHKAIGSQLTCVFVDTGMLRWGEGDQVMAMFAEHMGVNVVRINAASRYFDALQGVYDPEAKRKIIGNLFIQIFEEEASKRKQAKWLAQGTIYPDVIESAGSKTGKAHVIKSHHNVGGLPEQMTLGMVEPLRELFKDEVRRLGVALGLPHAMVYRHPFPGPGLGVRILGEVKPEYAELLAKADSIFIDELHQADLYDKVSQAFAVFLPVKSVGVVGDARAYEWVIALRAVETVDFMTAHWAPLPYDFLSTVSNRIINELRGVSRVVYDISGKPPATIEWE</sequence>
<proteinExistence type="inferred from homology"/>
<evidence type="ECO:0000255" key="1">
    <source>
        <dbReference type="HAMAP-Rule" id="MF_00344"/>
    </source>
</evidence>
<accession>B2I6W2</accession>
<comment type="function">
    <text evidence="1">Catalyzes the synthesis of GMP from XMP.</text>
</comment>
<comment type="catalytic activity">
    <reaction evidence="1">
        <text>XMP + L-glutamine + ATP + H2O = GMP + L-glutamate + AMP + diphosphate + 2 H(+)</text>
        <dbReference type="Rhea" id="RHEA:11680"/>
        <dbReference type="ChEBI" id="CHEBI:15377"/>
        <dbReference type="ChEBI" id="CHEBI:15378"/>
        <dbReference type="ChEBI" id="CHEBI:29985"/>
        <dbReference type="ChEBI" id="CHEBI:30616"/>
        <dbReference type="ChEBI" id="CHEBI:33019"/>
        <dbReference type="ChEBI" id="CHEBI:57464"/>
        <dbReference type="ChEBI" id="CHEBI:58115"/>
        <dbReference type="ChEBI" id="CHEBI:58359"/>
        <dbReference type="ChEBI" id="CHEBI:456215"/>
        <dbReference type="EC" id="6.3.5.2"/>
    </reaction>
</comment>
<comment type="pathway">
    <text evidence="1">Purine metabolism; GMP biosynthesis; GMP from XMP (L-Gln route): step 1/1.</text>
</comment>
<comment type="subunit">
    <text evidence="1">Homodimer.</text>
</comment>
<keyword id="KW-0067">ATP-binding</keyword>
<keyword id="KW-0315">Glutamine amidotransferase</keyword>
<keyword id="KW-0332">GMP biosynthesis</keyword>
<keyword id="KW-0436">Ligase</keyword>
<keyword id="KW-0547">Nucleotide-binding</keyword>
<keyword id="KW-0658">Purine biosynthesis</keyword>
<dbReference type="EC" id="6.3.5.2" evidence="1"/>
<dbReference type="EMBL" id="CP001011">
    <property type="protein sequence ID" value="ACB92939.1"/>
    <property type="molecule type" value="Genomic_DNA"/>
</dbReference>
<dbReference type="RefSeq" id="WP_004088421.1">
    <property type="nucleotide sequence ID" value="NC_010577.1"/>
</dbReference>
<dbReference type="SMR" id="B2I6W2"/>
<dbReference type="MEROPS" id="C26.957"/>
<dbReference type="GeneID" id="93905268"/>
<dbReference type="KEGG" id="xfn:XfasM23_1531"/>
<dbReference type="HOGENOM" id="CLU_014340_0_5_6"/>
<dbReference type="UniPathway" id="UPA00189">
    <property type="reaction ID" value="UER00296"/>
</dbReference>
<dbReference type="Proteomes" id="UP000001698">
    <property type="component" value="Chromosome"/>
</dbReference>
<dbReference type="GO" id="GO:0005829">
    <property type="term" value="C:cytosol"/>
    <property type="evidence" value="ECO:0007669"/>
    <property type="project" value="TreeGrafter"/>
</dbReference>
<dbReference type="GO" id="GO:0005524">
    <property type="term" value="F:ATP binding"/>
    <property type="evidence" value="ECO:0007669"/>
    <property type="project" value="UniProtKB-UniRule"/>
</dbReference>
<dbReference type="GO" id="GO:0003921">
    <property type="term" value="F:GMP synthase activity"/>
    <property type="evidence" value="ECO:0007669"/>
    <property type="project" value="InterPro"/>
</dbReference>
<dbReference type="CDD" id="cd01742">
    <property type="entry name" value="GATase1_GMP_Synthase"/>
    <property type="match status" value="1"/>
</dbReference>
<dbReference type="CDD" id="cd01997">
    <property type="entry name" value="GMP_synthase_C"/>
    <property type="match status" value="1"/>
</dbReference>
<dbReference type="FunFam" id="3.30.300.10:FF:000002">
    <property type="entry name" value="GMP synthase [glutamine-hydrolyzing]"/>
    <property type="match status" value="1"/>
</dbReference>
<dbReference type="FunFam" id="3.40.50.620:FF:000001">
    <property type="entry name" value="GMP synthase [glutamine-hydrolyzing]"/>
    <property type="match status" value="1"/>
</dbReference>
<dbReference type="FunFam" id="3.40.50.880:FF:000001">
    <property type="entry name" value="GMP synthase [glutamine-hydrolyzing]"/>
    <property type="match status" value="1"/>
</dbReference>
<dbReference type="Gene3D" id="3.30.300.10">
    <property type="match status" value="1"/>
</dbReference>
<dbReference type="Gene3D" id="3.40.50.880">
    <property type="match status" value="1"/>
</dbReference>
<dbReference type="Gene3D" id="3.40.50.620">
    <property type="entry name" value="HUPs"/>
    <property type="match status" value="1"/>
</dbReference>
<dbReference type="HAMAP" id="MF_00344">
    <property type="entry name" value="GMP_synthase"/>
    <property type="match status" value="1"/>
</dbReference>
<dbReference type="InterPro" id="IPR029062">
    <property type="entry name" value="Class_I_gatase-like"/>
</dbReference>
<dbReference type="InterPro" id="IPR017926">
    <property type="entry name" value="GATASE"/>
</dbReference>
<dbReference type="InterPro" id="IPR001674">
    <property type="entry name" value="GMP_synth_C"/>
</dbReference>
<dbReference type="InterPro" id="IPR004739">
    <property type="entry name" value="GMP_synth_GATase"/>
</dbReference>
<dbReference type="InterPro" id="IPR022955">
    <property type="entry name" value="GMP_synthase"/>
</dbReference>
<dbReference type="InterPro" id="IPR025777">
    <property type="entry name" value="GMPS_ATP_PPase_dom"/>
</dbReference>
<dbReference type="InterPro" id="IPR022310">
    <property type="entry name" value="NAD/GMP_synthase"/>
</dbReference>
<dbReference type="InterPro" id="IPR014729">
    <property type="entry name" value="Rossmann-like_a/b/a_fold"/>
</dbReference>
<dbReference type="NCBIfam" id="TIGR00884">
    <property type="entry name" value="guaA_Cterm"/>
    <property type="match status" value="1"/>
</dbReference>
<dbReference type="NCBIfam" id="TIGR00888">
    <property type="entry name" value="guaA_Nterm"/>
    <property type="match status" value="1"/>
</dbReference>
<dbReference type="NCBIfam" id="NF000848">
    <property type="entry name" value="PRK00074.1"/>
    <property type="match status" value="1"/>
</dbReference>
<dbReference type="PANTHER" id="PTHR11922:SF2">
    <property type="entry name" value="GMP SYNTHASE [GLUTAMINE-HYDROLYZING]"/>
    <property type="match status" value="1"/>
</dbReference>
<dbReference type="PANTHER" id="PTHR11922">
    <property type="entry name" value="GMP SYNTHASE-RELATED"/>
    <property type="match status" value="1"/>
</dbReference>
<dbReference type="Pfam" id="PF00117">
    <property type="entry name" value="GATase"/>
    <property type="match status" value="1"/>
</dbReference>
<dbReference type="Pfam" id="PF00958">
    <property type="entry name" value="GMP_synt_C"/>
    <property type="match status" value="1"/>
</dbReference>
<dbReference type="Pfam" id="PF02540">
    <property type="entry name" value="NAD_synthase"/>
    <property type="match status" value="1"/>
</dbReference>
<dbReference type="PRINTS" id="PR00097">
    <property type="entry name" value="ANTSNTHASEII"/>
</dbReference>
<dbReference type="PRINTS" id="PR00099">
    <property type="entry name" value="CPSGATASE"/>
</dbReference>
<dbReference type="PRINTS" id="PR00096">
    <property type="entry name" value="GATASE"/>
</dbReference>
<dbReference type="SUPFAM" id="SSF52402">
    <property type="entry name" value="Adenine nucleotide alpha hydrolases-like"/>
    <property type="match status" value="1"/>
</dbReference>
<dbReference type="SUPFAM" id="SSF52317">
    <property type="entry name" value="Class I glutamine amidotransferase-like"/>
    <property type="match status" value="1"/>
</dbReference>
<dbReference type="SUPFAM" id="SSF54810">
    <property type="entry name" value="GMP synthetase C-terminal dimerisation domain"/>
    <property type="match status" value="1"/>
</dbReference>
<dbReference type="PROSITE" id="PS51273">
    <property type="entry name" value="GATASE_TYPE_1"/>
    <property type="match status" value="1"/>
</dbReference>
<dbReference type="PROSITE" id="PS51553">
    <property type="entry name" value="GMPS_ATP_PPASE"/>
    <property type="match status" value="1"/>
</dbReference>
<name>GUAA_XYLF2</name>
<organism>
    <name type="scientific">Xylella fastidiosa (strain M23)</name>
    <dbReference type="NCBI Taxonomy" id="405441"/>
    <lineage>
        <taxon>Bacteria</taxon>
        <taxon>Pseudomonadati</taxon>
        <taxon>Pseudomonadota</taxon>
        <taxon>Gammaproteobacteria</taxon>
        <taxon>Lysobacterales</taxon>
        <taxon>Lysobacteraceae</taxon>
        <taxon>Xylella</taxon>
    </lineage>
</organism>
<feature type="chain" id="PRO_1000120454" description="GMP synthase [glutamine-hydrolyzing]">
    <location>
        <begin position="1"/>
        <end position="522"/>
    </location>
</feature>
<feature type="domain" description="Glutamine amidotransferase type-1" evidence="1">
    <location>
        <begin position="9"/>
        <end position="204"/>
    </location>
</feature>
<feature type="domain" description="GMPS ATP-PPase" evidence="1">
    <location>
        <begin position="205"/>
        <end position="397"/>
    </location>
</feature>
<feature type="active site" description="Nucleophile" evidence="1">
    <location>
        <position position="86"/>
    </location>
</feature>
<feature type="active site" evidence="1">
    <location>
        <position position="178"/>
    </location>
</feature>
<feature type="active site" evidence="1">
    <location>
        <position position="180"/>
    </location>
</feature>
<feature type="binding site" evidence="1">
    <location>
        <begin position="232"/>
        <end position="238"/>
    </location>
    <ligand>
        <name>ATP</name>
        <dbReference type="ChEBI" id="CHEBI:30616"/>
    </ligand>
</feature>